<protein>
    <recommendedName>
        <fullName>PA-phosphatase related-family protein DDB_G0275547</fullName>
    </recommendedName>
</protein>
<reference key="1">
    <citation type="journal article" date="2002" name="Nature">
        <title>Sequence and analysis of chromosome 2 of Dictyostelium discoideum.</title>
        <authorList>
            <person name="Gloeckner G."/>
            <person name="Eichinger L."/>
            <person name="Szafranski K."/>
            <person name="Pachebat J.A."/>
            <person name="Bankier A.T."/>
            <person name="Dear P.H."/>
            <person name="Lehmann R."/>
            <person name="Baumgart C."/>
            <person name="Parra G."/>
            <person name="Abril J.F."/>
            <person name="Guigo R."/>
            <person name="Kumpf K."/>
            <person name="Tunggal B."/>
            <person name="Cox E.C."/>
            <person name="Quail M.A."/>
            <person name="Platzer M."/>
            <person name="Rosenthal A."/>
            <person name="Noegel A.A."/>
        </authorList>
    </citation>
    <scope>NUCLEOTIDE SEQUENCE [LARGE SCALE GENOMIC DNA]</scope>
    <source>
        <strain>AX4</strain>
    </source>
</reference>
<reference key="2">
    <citation type="journal article" date="2005" name="Nature">
        <title>The genome of the social amoeba Dictyostelium discoideum.</title>
        <authorList>
            <person name="Eichinger L."/>
            <person name="Pachebat J.A."/>
            <person name="Gloeckner G."/>
            <person name="Rajandream M.A."/>
            <person name="Sucgang R."/>
            <person name="Berriman M."/>
            <person name="Song J."/>
            <person name="Olsen R."/>
            <person name="Szafranski K."/>
            <person name="Xu Q."/>
            <person name="Tunggal B."/>
            <person name="Kummerfeld S."/>
            <person name="Madera M."/>
            <person name="Konfortov B.A."/>
            <person name="Rivero F."/>
            <person name="Bankier A.T."/>
            <person name="Lehmann R."/>
            <person name="Hamlin N."/>
            <person name="Davies R."/>
            <person name="Gaudet P."/>
            <person name="Fey P."/>
            <person name="Pilcher K."/>
            <person name="Chen G."/>
            <person name="Saunders D."/>
            <person name="Sodergren E.J."/>
            <person name="Davis P."/>
            <person name="Kerhornou A."/>
            <person name="Nie X."/>
            <person name="Hall N."/>
            <person name="Anjard C."/>
            <person name="Hemphill L."/>
            <person name="Bason N."/>
            <person name="Farbrother P."/>
            <person name="Desany B."/>
            <person name="Just E."/>
            <person name="Morio T."/>
            <person name="Rost R."/>
            <person name="Churcher C.M."/>
            <person name="Cooper J."/>
            <person name="Haydock S."/>
            <person name="van Driessche N."/>
            <person name="Cronin A."/>
            <person name="Goodhead I."/>
            <person name="Muzny D.M."/>
            <person name="Mourier T."/>
            <person name="Pain A."/>
            <person name="Lu M."/>
            <person name="Harper D."/>
            <person name="Lindsay R."/>
            <person name="Hauser H."/>
            <person name="James K.D."/>
            <person name="Quiles M."/>
            <person name="Madan Babu M."/>
            <person name="Saito T."/>
            <person name="Buchrieser C."/>
            <person name="Wardroper A."/>
            <person name="Felder M."/>
            <person name="Thangavelu M."/>
            <person name="Johnson D."/>
            <person name="Knights A."/>
            <person name="Loulseged H."/>
            <person name="Mungall K.L."/>
            <person name="Oliver K."/>
            <person name="Price C."/>
            <person name="Quail M.A."/>
            <person name="Urushihara H."/>
            <person name="Hernandez J."/>
            <person name="Rabbinowitsch E."/>
            <person name="Steffen D."/>
            <person name="Sanders M."/>
            <person name="Ma J."/>
            <person name="Kohara Y."/>
            <person name="Sharp S."/>
            <person name="Simmonds M.N."/>
            <person name="Spiegler S."/>
            <person name="Tivey A."/>
            <person name="Sugano S."/>
            <person name="White B."/>
            <person name="Walker D."/>
            <person name="Woodward J.R."/>
            <person name="Winckler T."/>
            <person name="Tanaka Y."/>
            <person name="Shaulsky G."/>
            <person name="Schleicher M."/>
            <person name="Weinstock G.M."/>
            <person name="Rosenthal A."/>
            <person name="Cox E.C."/>
            <person name="Chisholm R.L."/>
            <person name="Gibbs R.A."/>
            <person name="Loomis W.F."/>
            <person name="Platzer M."/>
            <person name="Kay R.R."/>
            <person name="Williams J.G."/>
            <person name="Dear P.H."/>
            <person name="Noegel A.A."/>
            <person name="Barrell B.G."/>
            <person name="Kuspa A."/>
        </authorList>
    </citation>
    <scope>NUCLEOTIDE SEQUENCE [LARGE SCALE GENOMIC DNA]</scope>
    <source>
        <strain>AX4</strain>
    </source>
</reference>
<dbReference type="EMBL" id="AAFI02000013">
    <property type="protein sequence ID" value="EAL69524.1"/>
    <property type="molecule type" value="Genomic_DNA"/>
</dbReference>
<dbReference type="RefSeq" id="XP_643505.1">
    <property type="nucleotide sequence ID" value="XM_638413.1"/>
</dbReference>
<dbReference type="STRING" id="44689.Q8MXL9"/>
<dbReference type="GlyGen" id="Q8MXL9">
    <property type="glycosylation" value="1 site"/>
</dbReference>
<dbReference type="PaxDb" id="44689-DDB0232325"/>
<dbReference type="EnsemblProtists" id="EAL69524">
    <property type="protein sequence ID" value="EAL69524"/>
    <property type="gene ID" value="DDB_G0275547"/>
</dbReference>
<dbReference type="GeneID" id="8620086"/>
<dbReference type="KEGG" id="ddi:DDB_G0275547"/>
<dbReference type="dictyBase" id="DDB_G0275547"/>
<dbReference type="VEuPathDB" id="AmoebaDB:DDB_G0275547"/>
<dbReference type="eggNOG" id="KOG3030">
    <property type="taxonomic scope" value="Eukaryota"/>
</dbReference>
<dbReference type="HOGENOM" id="CLU_757429_0_0_1"/>
<dbReference type="InParanoid" id="Q8MXL9"/>
<dbReference type="OMA" id="HAFRHHN"/>
<dbReference type="PhylomeDB" id="Q8MXL9"/>
<dbReference type="Reactome" id="R-DDI-2029485">
    <property type="pathway name" value="Role of phospholipids in phagocytosis"/>
</dbReference>
<dbReference type="Reactome" id="R-DDI-419408">
    <property type="pathway name" value="Lysosphingolipid and LPA receptors"/>
</dbReference>
<dbReference type="Reactome" id="R-DDI-9845614">
    <property type="pathway name" value="Sphingolipid catabolism"/>
</dbReference>
<dbReference type="PRO" id="PR:Q8MXL9"/>
<dbReference type="Proteomes" id="UP000002195">
    <property type="component" value="Chromosome 2"/>
</dbReference>
<dbReference type="GO" id="GO:0016020">
    <property type="term" value="C:membrane"/>
    <property type="evidence" value="ECO:0000318"/>
    <property type="project" value="GO_Central"/>
</dbReference>
<dbReference type="GO" id="GO:0008195">
    <property type="term" value="F:phosphatidate phosphatase activity"/>
    <property type="evidence" value="ECO:0000318"/>
    <property type="project" value="GO_Central"/>
</dbReference>
<dbReference type="GO" id="GO:0046839">
    <property type="term" value="P:phospholipid dephosphorylation"/>
    <property type="evidence" value="ECO:0000318"/>
    <property type="project" value="GO_Central"/>
</dbReference>
<dbReference type="GO" id="GO:0006644">
    <property type="term" value="P:phospholipid metabolic process"/>
    <property type="evidence" value="ECO:0000318"/>
    <property type="project" value="GO_Central"/>
</dbReference>
<dbReference type="CDD" id="cd03390">
    <property type="entry name" value="PAP2_containing_1_like"/>
    <property type="match status" value="1"/>
</dbReference>
<dbReference type="FunFam" id="1.20.144.10:FF:000067">
    <property type="entry name" value="PA-phosphatase related-family protein DDB_G0275547"/>
    <property type="match status" value="1"/>
</dbReference>
<dbReference type="Gene3D" id="1.20.144.10">
    <property type="entry name" value="Phosphatidic acid phosphatase type 2/haloperoxidase"/>
    <property type="match status" value="1"/>
</dbReference>
<dbReference type="InterPro" id="IPR036938">
    <property type="entry name" value="P_Acid_Pase_2/haloperoxi_sf"/>
</dbReference>
<dbReference type="InterPro" id="IPR000326">
    <property type="entry name" value="P_Acid_Pase_2/haloperoxidase"/>
</dbReference>
<dbReference type="InterPro" id="IPR043216">
    <property type="entry name" value="PA_PP_rel"/>
</dbReference>
<dbReference type="PANTHER" id="PTHR10165">
    <property type="entry name" value="LIPID PHOSPHATE PHOSPHATASE"/>
    <property type="match status" value="1"/>
</dbReference>
<dbReference type="PANTHER" id="PTHR10165:SF108">
    <property type="entry name" value="PA-PHOSPHATASE RELATED-FAMILY PROTEIN DDB_G0271516-RELATED"/>
    <property type="match status" value="1"/>
</dbReference>
<dbReference type="Pfam" id="PF01569">
    <property type="entry name" value="PAP2"/>
    <property type="match status" value="1"/>
</dbReference>
<dbReference type="SMART" id="SM00014">
    <property type="entry name" value="acidPPc"/>
    <property type="match status" value="1"/>
</dbReference>
<dbReference type="SUPFAM" id="SSF48317">
    <property type="entry name" value="Acid phosphatase/Vanadium-dependent haloperoxidase"/>
    <property type="match status" value="1"/>
</dbReference>
<proteinExistence type="inferred from homology"/>
<gene>
    <name type="ORF">DDB_G0275547</name>
</gene>
<name>Y5547_DICDI</name>
<keyword id="KW-0472">Membrane</keyword>
<keyword id="KW-1185">Reference proteome</keyword>
<keyword id="KW-0812">Transmembrane</keyword>
<keyword id="KW-1133">Transmembrane helix</keyword>
<accession>Q8MXL9</accession>
<accession>Q553B5</accession>
<feature type="chain" id="PRO_0000367485" description="PA-phosphatase related-family protein DDB_G0275547">
    <location>
        <begin position="1"/>
        <end position="335"/>
    </location>
</feature>
<feature type="transmembrane region" description="Helical" evidence="1">
    <location>
        <begin position="43"/>
        <end position="63"/>
    </location>
</feature>
<feature type="transmembrane region" description="Helical" evidence="1">
    <location>
        <begin position="93"/>
        <end position="113"/>
    </location>
</feature>
<feature type="transmembrane region" description="Helical" evidence="1">
    <location>
        <begin position="124"/>
        <end position="144"/>
    </location>
</feature>
<feature type="transmembrane region" description="Helical" evidence="1">
    <location>
        <begin position="202"/>
        <end position="222"/>
    </location>
</feature>
<feature type="transmembrane region" description="Helical" evidence="1">
    <location>
        <begin position="226"/>
        <end position="246"/>
    </location>
</feature>
<feature type="transmembrane region" description="Helical" evidence="1">
    <location>
        <begin position="254"/>
        <end position="274"/>
    </location>
</feature>
<comment type="subcellular location">
    <subcellularLocation>
        <location evidence="2">Membrane</location>
        <topology evidence="2">Multi-pass membrane protein</topology>
    </subcellularLocation>
</comment>
<comment type="similarity">
    <text evidence="2">Belongs to the PA-phosphatase related phosphoesterase family.</text>
</comment>
<evidence type="ECO:0000255" key="1"/>
<evidence type="ECO:0000305" key="2"/>
<sequence length="335" mass="37750">MDRNFLNESNNSTNNRNKYVIYDEEESKPLFYNYDFRKKNKMVMYLFDWMMVVILLIVGGILFLKVTVRGRLFTLDDESISYPKLPELVPMHVLIPVIIALPLAIIIVVSLIVKRDCHDFHHAILGLAQSLALTLLLTGSFKCFIGGLRPNFLEVCDPTPASIAAGNPPVGFSKIYYDRSICSADDSIVNDALSAYPSGHSSITAASFGFLALFIHAKFKIFDNRGHIFLYVIVSGCIIGAGLIGISRVADYRHTFLNVLAGWSIGLIIALSCYRLNYSSLFGRDNHVSIHSHWLTYWNHHDNLNNNNNNIKNNFDLEKNCNQSPNNIALDELNK</sequence>
<organism>
    <name type="scientific">Dictyostelium discoideum</name>
    <name type="common">Social amoeba</name>
    <dbReference type="NCBI Taxonomy" id="44689"/>
    <lineage>
        <taxon>Eukaryota</taxon>
        <taxon>Amoebozoa</taxon>
        <taxon>Evosea</taxon>
        <taxon>Eumycetozoa</taxon>
        <taxon>Dictyostelia</taxon>
        <taxon>Dictyosteliales</taxon>
        <taxon>Dictyosteliaceae</taxon>
        <taxon>Dictyostelium</taxon>
    </lineage>
</organism>